<comment type="function">
    <text evidence="2 3">Exhibits highly specific blockage of Kv2.1/KCNB1 (IC(50)=41.7 nM) voltage-gated potassium channels (PubMed:24464516). This blockage is not associated with a significant change in steady-state activation, suggesting that this toxin acts as a channel blocker rather than a gating-modifier (PubMed:24464516). Shows potential analgesic activities in formalin-induced paw licking, thermal pain, and acetic acid-induced abdominal writhing mice models (PubMed:28247497).</text>
</comment>
<comment type="subcellular location">
    <subcellularLocation>
        <location evidence="2 3">Secreted</location>
    </subcellularLocation>
</comment>
<comment type="tissue specificity">
    <text evidence="6 7">Expressed by the venom gland.</text>
</comment>
<comment type="mass spectrometry">
    <text>Average mass.</text>
</comment>
<comment type="mass spectrometry"/>
<comment type="miscellaneous">
    <text evidence="2">Negative results: Does not affect sodium currents in rat DRG cells. Shows little or no effect against Kv1.1/KCNA1, Kv1.3/KCNA3, Kv1.4/KCNA4, Kv2.2/KCNB2, Kv3.1/KCNC1, Kv4.1/KCND1, Kv4.2/KCND2, or Kv4.3/KCND3 potassium channels.</text>
</comment>
<comment type="similarity">
    <text evidence="5">Belongs to the scoloptoxin-04 family.</text>
</comment>
<organism>
    <name type="scientific">Scolopendra mutilans</name>
    <name type="common">Chinese red-headed centipede</name>
    <name type="synonym">Scolopendra subspinipes mutilans</name>
    <dbReference type="NCBI Taxonomy" id="2836329"/>
    <lineage>
        <taxon>Eukaryota</taxon>
        <taxon>Metazoa</taxon>
        <taxon>Ecdysozoa</taxon>
        <taxon>Arthropoda</taxon>
        <taxon>Myriapoda</taxon>
        <taxon>Chilopoda</taxon>
        <taxon>Pleurostigmophora</taxon>
        <taxon>Scolopendromorpha</taxon>
        <taxon>Scolopendridae</taxon>
        <taxon>Scolopendra</taxon>
    </lineage>
</organism>
<name>TX44A_SCOMU</name>
<dbReference type="SMR" id="P0DRC9"/>
<dbReference type="GO" id="GO:0005576">
    <property type="term" value="C:extracellular region"/>
    <property type="evidence" value="ECO:0007669"/>
    <property type="project" value="UniProtKB-SubCell"/>
</dbReference>
<dbReference type="GO" id="GO:0015459">
    <property type="term" value="F:potassium channel regulator activity"/>
    <property type="evidence" value="ECO:0007669"/>
    <property type="project" value="UniProtKB-KW"/>
</dbReference>
<dbReference type="GO" id="GO:0090729">
    <property type="term" value="F:toxin activity"/>
    <property type="evidence" value="ECO:0007669"/>
    <property type="project" value="UniProtKB-KW"/>
</dbReference>
<accession>P0DRC9</accession>
<evidence type="ECO:0000255" key="1"/>
<evidence type="ECO:0000269" key="2">
    <source>
    </source>
</evidence>
<evidence type="ECO:0000269" key="3">
    <source>
    </source>
</evidence>
<evidence type="ECO:0000303" key="4">
    <source>
    </source>
</evidence>
<evidence type="ECO:0000305" key="5"/>
<evidence type="ECO:0000305" key="6">
    <source>
    </source>
</evidence>
<evidence type="ECO:0000305" key="7">
    <source>
    </source>
</evidence>
<feature type="signal peptide" evidence="1">
    <location>
        <begin position="1"/>
        <end position="25"/>
    </location>
</feature>
<feature type="propeptide" id="PRO_0000461169" evidence="5">
    <location>
        <begin position="26"/>
        <end position="37"/>
    </location>
</feature>
<feature type="chain" id="PRO_0000461170" description="Kappa-scoloptoxin SsmTx-I" evidence="2">
    <location>
        <begin position="38"/>
        <end position="73"/>
    </location>
</feature>
<feature type="disulfide bond" evidence="3">
    <location>
        <begin position="45"/>
        <end position="56"/>
    </location>
</feature>
<feature type="disulfide bond" evidence="3">
    <location>
        <begin position="50"/>
        <end position="63"/>
    </location>
</feature>
<reference key="1">
    <citation type="journal article" date="2017" name="J. Pept. Sci.">
        <title>Centipede venom peptide SsmTX-I with two intramolecular disulfide bonds shows analgesic activities in animal models.</title>
        <authorList>
            <person name="Wang Y."/>
            <person name="Li X."/>
            <person name="Yang M."/>
            <person name="Wu C."/>
            <person name="Zou Z."/>
            <person name="Tang J."/>
            <person name="Yang X."/>
        </authorList>
    </citation>
    <scope>NUCLEOTIDE SEQUENCE [MRNA]</scope>
    <scope>PROTEIN SEQUENCE OF 38-73</scope>
    <scope>SUBCELLULAR LOCATION</scope>
    <scope>MASS SPECTROMETRY</scope>
    <scope>DISULFIDE BONDS</scope>
    <scope>SYNTHESIS OF 38-73</scope>
    <scope>BIOASSAY</scope>
    <source>
        <tissue>Venom</tissue>
        <tissue>Venom gland</tissue>
    </source>
</reference>
<reference key="2">
    <citation type="journal article" date="2014" name="J. Pept. Sci.">
        <title>Isolation and characterization of SsmTx-I, a specific Kv2.1 blocker from the venom of the centipede Scolopendra Subspinipes Mutilans L. Koch.</title>
        <authorList>
            <person name="Chen M."/>
            <person name="Li J."/>
            <person name="Zhang F."/>
            <person name="Liu Z."/>
        </authorList>
    </citation>
    <scope>PROTEIN SEQUENCE OF 38-73</scope>
    <scope>SUBCELLULAR LOCATION</scope>
    <scope>MASS SPECTROMETRY</scope>
    <scope>FUNCTION</scope>
    <source>
        <tissue>Venom</tissue>
    </source>
</reference>
<sequence>MMMMFSVVSVFLMLLLLKFHDLSMGEEISLLKKVVRREESMLLSCPDLSCPTGYTCDVLTKKCKRLSDELWDH</sequence>
<keyword id="KW-0165">Cleavage on pair of basic residues</keyword>
<keyword id="KW-0903">Direct protein sequencing</keyword>
<keyword id="KW-1015">Disulfide bond</keyword>
<keyword id="KW-0872">Ion channel impairing toxin</keyword>
<keyword id="KW-0632">Potassium channel impairing toxin</keyword>
<keyword id="KW-0964">Secreted</keyword>
<keyword id="KW-0732">Signal</keyword>
<keyword id="KW-0800">Toxin</keyword>
<keyword id="KW-1220">Voltage-gated potassium channel impairing toxin</keyword>
<protein>
    <recommendedName>
        <fullName evidence="4 5">Kappa-scoloptoxin SsmTx-I</fullName>
    </recommendedName>
    <alternativeName>
        <fullName evidence="5">Kappa-scoloptoxin(04)-Ssm4a</fullName>
        <shortName evidence="5">Kappa-SLPTX(04)-Ssm4a</shortName>
    </alternativeName>
</protein>
<proteinExistence type="evidence at protein level"/>